<gene>
    <name type="primary">psiG-1</name>
    <name type="ORF">DDB_G0273389</name>
</gene>
<gene>
    <name type="primary">psiG-2</name>
    <name type="ORF">DDB_G0273605</name>
</gene>
<evidence type="ECO:0000255" key="1"/>
<evidence type="ECO:0000255" key="2">
    <source>
        <dbReference type="PROSITE-ProRule" id="PRU01164"/>
    </source>
</evidence>
<evidence type="ECO:0000256" key="3">
    <source>
        <dbReference type="SAM" id="MobiDB-lite"/>
    </source>
</evidence>
<evidence type="ECO:0000305" key="4"/>
<proteinExistence type="inferred from homology"/>
<protein>
    <recommendedName>
        <fullName>Protein psiG</fullName>
    </recommendedName>
</protein>
<dbReference type="EMBL" id="AAFI02000011">
    <property type="protein sequence ID" value="EAL70493.1"/>
    <property type="molecule type" value="Genomic_DNA"/>
</dbReference>
<dbReference type="EMBL" id="AAFI02000009">
    <property type="protein sequence ID" value="EAL70912.1"/>
    <property type="molecule type" value="Genomic_DNA"/>
</dbReference>
<dbReference type="RefSeq" id="XP_644419.1">
    <property type="nucleotide sequence ID" value="XM_639327.1"/>
</dbReference>
<dbReference type="RefSeq" id="XP_644831.1">
    <property type="nucleotide sequence ID" value="XM_639739.1"/>
</dbReference>
<dbReference type="FunCoup" id="Q557E9">
    <property type="interactions" value="12"/>
</dbReference>
<dbReference type="GlyCosmos" id="Q557E9">
    <property type="glycosylation" value="8 sites, No reported glycans"/>
</dbReference>
<dbReference type="GlyGen" id="Q557E9">
    <property type="glycosylation" value="8 sites"/>
</dbReference>
<dbReference type="PaxDb" id="44689-DDB0232399"/>
<dbReference type="EnsemblProtists" id="EAL70493">
    <property type="protein sequence ID" value="EAL70493"/>
    <property type="gene ID" value="DDB_G0273605"/>
</dbReference>
<dbReference type="EnsemblProtists" id="EAL70912">
    <property type="protein sequence ID" value="EAL70912"/>
    <property type="gene ID" value="DDB_G0273389"/>
</dbReference>
<dbReference type="GeneID" id="8618933"/>
<dbReference type="GeneID" id="8619044"/>
<dbReference type="KEGG" id="ddi:DDB_G0273389"/>
<dbReference type="KEGG" id="ddi:DDB_G0273605"/>
<dbReference type="dictyBase" id="DDB_G0273389">
    <property type="gene designation" value="psiG-1"/>
</dbReference>
<dbReference type="dictyBase" id="DDB_G0273605">
    <property type="gene designation" value="psiG-2"/>
</dbReference>
<dbReference type="VEuPathDB" id="AmoebaDB:DDB_G0273605"/>
<dbReference type="eggNOG" id="ENOG502RFD8">
    <property type="taxonomic scope" value="Eukaryota"/>
</dbReference>
<dbReference type="HOGENOM" id="CLU_024170_0_0_1"/>
<dbReference type="InParanoid" id="Q557E9"/>
<dbReference type="OMA" id="CERHTPY"/>
<dbReference type="PhylomeDB" id="Q557E9"/>
<dbReference type="PRO" id="PR:Q557E9"/>
<dbReference type="Proteomes" id="UP000002195">
    <property type="component" value="Chromosome 2"/>
</dbReference>
<dbReference type="GO" id="GO:0005576">
    <property type="term" value="C:extracellular region"/>
    <property type="evidence" value="ECO:0000318"/>
    <property type="project" value="GO_Central"/>
</dbReference>
<dbReference type="GO" id="GO:0016020">
    <property type="term" value="C:membrane"/>
    <property type="evidence" value="ECO:0007669"/>
    <property type="project" value="UniProtKB-SubCell"/>
</dbReference>
<dbReference type="InterPro" id="IPR011874">
    <property type="entry name" value="Fibro_Slime"/>
</dbReference>
<dbReference type="InterPro" id="IPR037524">
    <property type="entry name" value="PA14/GLEYA"/>
</dbReference>
<dbReference type="InterPro" id="IPR011658">
    <property type="entry name" value="PA14_dom"/>
</dbReference>
<dbReference type="InterPro" id="IPR051154">
    <property type="entry name" value="Prespore-cell_inducing_factor"/>
</dbReference>
<dbReference type="InterPro" id="IPR001673">
    <property type="entry name" value="S_mold_repeat"/>
</dbReference>
<dbReference type="NCBIfam" id="TIGR02148">
    <property type="entry name" value="Fibro_Slime"/>
    <property type="match status" value="1"/>
</dbReference>
<dbReference type="PANTHER" id="PTHR31137">
    <property type="entry name" value="PROTEIN PSIB-RELATED-RELATED"/>
    <property type="match status" value="1"/>
</dbReference>
<dbReference type="PANTHER" id="PTHR31137:SF2">
    <property type="entry name" value="PROTEIN PSIG"/>
    <property type="match status" value="1"/>
</dbReference>
<dbReference type="Pfam" id="PF00526">
    <property type="entry name" value="Dicty_CTDC"/>
    <property type="match status" value="3"/>
</dbReference>
<dbReference type="Pfam" id="PF07691">
    <property type="entry name" value="PA14"/>
    <property type="match status" value="1"/>
</dbReference>
<dbReference type="PROSITE" id="PS51820">
    <property type="entry name" value="PA14"/>
    <property type="match status" value="1"/>
</dbReference>
<comment type="subcellular location">
    <subcellularLocation>
        <location evidence="4">Membrane</location>
        <topology evidence="4">Single-pass type I membrane protein</topology>
    </subcellularLocation>
</comment>
<comment type="similarity">
    <text evidence="4">Belongs to the prespore-cell-inducing factor family.</text>
</comment>
<comment type="caution">
    <text evidence="4">The gene for this protein is duplicated in strains AX3 and AX4. These strains contain a duplication of a segment of 750 kb of chromosome 2 compared to the corresponding sequence in strain AX2.</text>
</comment>
<keyword id="KW-0325">Glycoprotein</keyword>
<keyword id="KW-0472">Membrane</keyword>
<keyword id="KW-1185">Reference proteome</keyword>
<keyword id="KW-0732">Signal</keyword>
<keyword id="KW-0812">Transmembrane</keyword>
<keyword id="KW-1133">Transmembrane helix</keyword>
<accession>Q557E9</accession>
<accession>Q86HZ1</accession>
<sequence length="706" mass="76874">MKIILTLLIILFSLNKNLNFVSSEVTKSRICSIFDQLPKLNSDFEPDYGDISVGMIKNVLEGDSPTLASNDPNFKPFVNGKLKNLNLFPTWFNKNHTQNVMLLKKLNLTLDKSSNIYSFVKDDFFPIDYQGWDVDESNRIYYGGRIFTAYHNFHYCLKINSVFFYQGTETFKFEGDDDVWVFIDKKLVLDLGGLHPARRGTVDLTKLGLQVNKTYSFDFFYCERHTPYSKMKIQTDIQAFCAWSDYCGVCQGDGSTCCNKDLDCDDDDPCTIDSCPLPNLPIPGGDKISKYCRHTNITCTQPSNNKCVITGCSKDTNGKCEVIGNLECADKSKYCMTLTGCDPKLGCQYKSNCIGPCLTGECNNGKCTSMDADYCSNELGEDPCKIYSCNAKNGGCMATPKCTSPSSSNPCVIPTCSADKGVCGTYTQNSTECNCNCKLNPCQKNNCDQSVNPPVCSPLPIDTIDDGNPCTIDICDKITGSVKHTPMECSGCTKCNNGKCIPIESNCDDGNLCTIDQCMNNGSCIHTPLSCNITNPCMDYTCNADIGCVGVPKICPNKGNCLIGYCDAGECKLKDRICDSPSFCQISQCSDVTGCIVFDKVCIPSNPKCETGVCINATSTEPGRCESVDFDPKPFVCKPAAIISTSVIVGVSVAAAVVAIAIVVASKKGYDAWAASNNNSLASLTSNPLYENPTGNGDNPMYQPNS</sequence>
<name>PSIG_DICDI</name>
<organism>
    <name type="scientific">Dictyostelium discoideum</name>
    <name type="common">Social amoeba</name>
    <dbReference type="NCBI Taxonomy" id="44689"/>
    <lineage>
        <taxon>Eukaryota</taxon>
        <taxon>Amoebozoa</taxon>
        <taxon>Evosea</taxon>
        <taxon>Eumycetozoa</taxon>
        <taxon>Dictyostelia</taxon>
        <taxon>Dictyosteliales</taxon>
        <taxon>Dictyosteliaceae</taxon>
        <taxon>Dictyostelium</taxon>
    </lineage>
</organism>
<reference key="1">
    <citation type="journal article" date="2002" name="Nature">
        <title>Sequence and analysis of chromosome 2 of Dictyostelium discoideum.</title>
        <authorList>
            <person name="Gloeckner G."/>
            <person name="Eichinger L."/>
            <person name="Szafranski K."/>
            <person name="Pachebat J.A."/>
            <person name="Bankier A.T."/>
            <person name="Dear P.H."/>
            <person name="Lehmann R."/>
            <person name="Baumgart C."/>
            <person name="Parra G."/>
            <person name="Abril J.F."/>
            <person name="Guigo R."/>
            <person name="Kumpf K."/>
            <person name="Tunggal B."/>
            <person name="Cox E.C."/>
            <person name="Quail M.A."/>
            <person name="Platzer M."/>
            <person name="Rosenthal A."/>
            <person name="Noegel A.A."/>
        </authorList>
    </citation>
    <scope>NUCLEOTIDE SEQUENCE [LARGE SCALE GENOMIC DNA]</scope>
    <source>
        <strain>AX4</strain>
    </source>
</reference>
<reference key="2">
    <citation type="journal article" date="2005" name="Nature">
        <title>The genome of the social amoeba Dictyostelium discoideum.</title>
        <authorList>
            <person name="Eichinger L."/>
            <person name="Pachebat J.A."/>
            <person name="Gloeckner G."/>
            <person name="Rajandream M.A."/>
            <person name="Sucgang R."/>
            <person name="Berriman M."/>
            <person name="Song J."/>
            <person name="Olsen R."/>
            <person name="Szafranski K."/>
            <person name="Xu Q."/>
            <person name="Tunggal B."/>
            <person name="Kummerfeld S."/>
            <person name="Madera M."/>
            <person name="Konfortov B.A."/>
            <person name="Rivero F."/>
            <person name="Bankier A.T."/>
            <person name="Lehmann R."/>
            <person name="Hamlin N."/>
            <person name="Davies R."/>
            <person name="Gaudet P."/>
            <person name="Fey P."/>
            <person name="Pilcher K."/>
            <person name="Chen G."/>
            <person name="Saunders D."/>
            <person name="Sodergren E.J."/>
            <person name="Davis P."/>
            <person name="Kerhornou A."/>
            <person name="Nie X."/>
            <person name="Hall N."/>
            <person name="Anjard C."/>
            <person name="Hemphill L."/>
            <person name="Bason N."/>
            <person name="Farbrother P."/>
            <person name="Desany B."/>
            <person name="Just E."/>
            <person name="Morio T."/>
            <person name="Rost R."/>
            <person name="Churcher C.M."/>
            <person name="Cooper J."/>
            <person name="Haydock S."/>
            <person name="van Driessche N."/>
            <person name="Cronin A."/>
            <person name="Goodhead I."/>
            <person name="Muzny D.M."/>
            <person name="Mourier T."/>
            <person name="Pain A."/>
            <person name="Lu M."/>
            <person name="Harper D."/>
            <person name="Lindsay R."/>
            <person name="Hauser H."/>
            <person name="James K.D."/>
            <person name="Quiles M."/>
            <person name="Madan Babu M."/>
            <person name="Saito T."/>
            <person name="Buchrieser C."/>
            <person name="Wardroper A."/>
            <person name="Felder M."/>
            <person name="Thangavelu M."/>
            <person name="Johnson D."/>
            <person name="Knights A."/>
            <person name="Loulseged H."/>
            <person name="Mungall K.L."/>
            <person name="Oliver K."/>
            <person name="Price C."/>
            <person name="Quail M.A."/>
            <person name="Urushihara H."/>
            <person name="Hernandez J."/>
            <person name="Rabbinowitsch E."/>
            <person name="Steffen D."/>
            <person name="Sanders M."/>
            <person name="Ma J."/>
            <person name="Kohara Y."/>
            <person name="Sharp S."/>
            <person name="Simmonds M.N."/>
            <person name="Spiegler S."/>
            <person name="Tivey A."/>
            <person name="Sugano S."/>
            <person name="White B."/>
            <person name="Walker D."/>
            <person name="Woodward J.R."/>
            <person name="Winckler T."/>
            <person name="Tanaka Y."/>
            <person name="Shaulsky G."/>
            <person name="Schleicher M."/>
            <person name="Weinstock G.M."/>
            <person name="Rosenthal A."/>
            <person name="Cox E.C."/>
            <person name="Chisholm R.L."/>
            <person name="Gibbs R.A."/>
            <person name="Loomis W.F."/>
            <person name="Platzer M."/>
            <person name="Kay R.R."/>
            <person name="Williams J.G."/>
            <person name="Dear P.H."/>
            <person name="Noegel A.A."/>
            <person name="Barrell B.G."/>
            <person name="Kuspa A."/>
        </authorList>
    </citation>
    <scope>NUCLEOTIDE SEQUENCE [LARGE SCALE GENOMIC DNA]</scope>
    <source>
        <strain>AX4</strain>
    </source>
</reference>
<feature type="signal peptide" evidence="1">
    <location>
        <begin position="1"/>
        <end position="23"/>
    </location>
</feature>
<feature type="chain" id="PRO_0000327550" description="Protein psiG">
    <location>
        <begin position="24"/>
        <end position="706"/>
    </location>
</feature>
<feature type="topological domain" description="Extracellular" evidence="1">
    <location>
        <begin position="24"/>
        <end position="644"/>
    </location>
</feature>
<feature type="transmembrane region" description="Helical" evidence="1">
    <location>
        <begin position="645"/>
        <end position="665"/>
    </location>
</feature>
<feature type="topological domain" description="Cytoplasmic" evidence="1">
    <location>
        <begin position="666"/>
        <end position="706"/>
    </location>
</feature>
<feature type="domain" description="PA14" evidence="2">
    <location>
        <begin position="109"/>
        <end position="253"/>
    </location>
</feature>
<feature type="region of interest" description="Disordered" evidence="3">
    <location>
        <begin position="687"/>
        <end position="706"/>
    </location>
</feature>
<feature type="compositionally biased region" description="Polar residues" evidence="3">
    <location>
        <begin position="693"/>
        <end position="706"/>
    </location>
</feature>
<feature type="glycosylation site" description="N-linked (GlcNAc...) asparagine" evidence="1">
    <location>
        <position position="95"/>
    </location>
</feature>
<feature type="glycosylation site" description="N-linked (GlcNAc...) asparagine" evidence="1">
    <location>
        <position position="107"/>
    </location>
</feature>
<feature type="glycosylation site" description="N-linked (GlcNAc...) asparagine" evidence="1">
    <location>
        <position position="212"/>
    </location>
</feature>
<feature type="glycosylation site" description="N-linked (GlcNAc...) asparagine" evidence="1">
    <location>
        <position position="296"/>
    </location>
</feature>
<feature type="glycosylation site" description="N-linked (GlcNAc...) asparagine" evidence="1">
    <location>
        <position position="429"/>
    </location>
</feature>
<feature type="glycosylation site" description="N-linked (GlcNAc...) asparagine" evidence="1">
    <location>
        <position position="521"/>
    </location>
</feature>
<feature type="glycosylation site" description="N-linked (GlcNAc...) asparagine" evidence="1">
    <location>
        <position position="532"/>
    </location>
</feature>
<feature type="glycosylation site" description="N-linked (GlcNAc...) asparagine" evidence="1">
    <location>
        <position position="616"/>
    </location>
</feature>